<sequence length="1249" mass="134447">MQERHGLPLRSFSSGKALTAGRAVRPEVAQERRYLQGAPLGLELPGRIALRDPHCAWQWFEPEAAAEAFPAAHWLAAFLVLLGRYGNEEITLGFPEPITVRGRQAPALLRSSYRAMESSAERSARLAEELDDARRQLSADGQERAALAGRCAVQVLAARPTASSPGWLALVLAADGSVGLALRDPQYDELRRIAGHLARLARGLVDAQACVGRLPWLDADEERRLQALRSEPQAAPSRGVLHHLFEAQARRTPQRIAVHAADRSLSYAELERESAALAVRLRAAGVAPEQRVGVCLRRDSGLLVGLLGVLRAGGCYVPLDPAYPEERVAYMLDDADCLLVLVDASTRERVAALGRPCLTLEEGGDQANDLALPASEVGADHLAYIIYTSGSTGRPKGVAIEHGSAHAFLRWAGQHYAAEEWSGVLAATSVCFDLSVYELFGTLAEGGTLHLVENLFSLPDYPRRDEISLLNTVPSVCAALLALGDLPGGVRTLNLAGEPLRGHLVRQIRGQPQVRRLVNLYGPTEDTTYSTVHELDLHAEALDEPPIGRPLPGTTVEVLDGFEAPLPLGVAGELYLGGIGLARGYFGKPEQTAERFRVDPGSGERRYRTGDRVRMREDGVLEHLGRLDDQVKFNGFRIELGEIASCLASFPGVSEACAMLTEDSAGLRRLVGYLAAPFAPPLQALNEHLGQSLPHYMLPSAFVVLAELPKTLNGKIDRKALPRPQATGAEPQALPSDPLEQALHQAWQAQLGAPPRAGQGFYAAGGDSLRAVHLLATLRQRLSRRVPLQAFAGGPATPEALLELLRQAAPEGDEPEPSAGAAGLSLAERRLWVAQQLAPEDTSYNLLAHLRIVGATADAIEQALRQLLERHVALRRRVETGVDGPQPHALAAHAVPLQRLLASDAVHAERLLEDGVRREGARVFDLAHEAPARLLLVVTRDSARADLLLSVHHYAFDDVSLAVFAAELKTLLDGGRLGVLASTPEQVAARERAALASGRLDRVAERWAERLLPLAKAPGAAPARPEESGGRAGQRLALPVSAAVHAACRALAERTSVSPFSAALQAFAEVLGAELGVDDLLVGVALAGRSRLEMQGLVGCFVNLLPLAVGLRPEQSVEWRLRQVGHDLLELLEHQDVPLECVTQALRQRGASGLPIRIACGAHNGRAAPAVDAGVRVEADFIPVPGARLDLTLWLEDQPQGWLAVWTGVSAIFDLHRIERLHQAWERRLLANAGEPISKRMSPEGCNAS</sequence>
<name>AMBB_PSEAE</name>
<comment type="function">
    <text evidence="3 5">Involved in the biosynthesis of the antimetabolite L-2-amino-4-methoxy-trans-3-butenoic acid (AMB), a non-proteinogenic amino acid which is toxic for prokaryotes and eukaryotes (PubMed:20543073, PubMed:25814981). Adenylates L-alanine and loads it onto its peptidyl carrier domain via a thioester linkage to the phosphopanthetheine moiety. In addition, loads activated L-Ala in trans onto the second carrier domain of AmbE (PubMed:25814981). Can also activate L-Ser, Gly and D-Ala, albeit to a lower extent (PubMed:25814981). The condensation domain of AmbB probably condenses the activated L-Ala and the L-Glu loaded on AmbE to form a L-Glu-L-Ala dipeptide at the first carrier domain of AmbE (PubMed:25814981).</text>
</comment>
<comment type="catalytic activity">
    <reaction evidence="5">
        <text>holo-[peptidyl-carrier protein] + L-alanine + ATP = L-alanyl-[peptidyl-carrier protein] + AMP + diphosphate</text>
        <dbReference type="Rhea" id="RHEA:61800"/>
        <dbReference type="Rhea" id="RHEA-COMP:11480"/>
        <dbReference type="Rhea" id="RHEA-COMP:15938"/>
        <dbReference type="ChEBI" id="CHEBI:30616"/>
        <dbReference type="ChEBI" id="CHEBI:33019"/>
        <dbReference type="ChEBI" id="CHEBI:57972"/>
        <dbReference type="ChEBI" id="CHEBI:64479"/>
        <dbReference type="ChEBI" id="CHEBI:144958"/>
        <dbReference type="ChEBI" id="CHEBI:456215"/>
        <dbReference type="EC" id="6.2.1.67"/>
    </reaction>
    <physiologicalReaction direction="left-to-right" evidence="5">
        <dbReference type="Rhea" id="RHEA:61801"/>
    </physiologicalReaction>
</comment>
<comment type="cofactor">
    <cofactor evidence="5">
        <name>pantetheine 4'-phosphate</name>
        <dbReference type="ChEBI" id="CHEBI:47942"/>
    </cofactor>
</comment>
<comment type="induction">
    <text evidence="4">Expression is regulated by the PhoR-PhoB two-component system.</text>
</comment>
<comment type="domain">
    <text evidence="8">Modular protein that contains an adenylation domain which activates the alanine residue into an aminoacyl-AMP ester, a peptidyl carrier protein domain which bears a phosphopantetheinyl arm to attach the activated alanine and a condensation domain involved in the condensation of this amino acid with a second amino acid bound at the carrier protein domain of another module.</text>
</comment>
<comment type="disruption phenotype">
    <text evidence="3 4">Mutation abolishes AMB production (PubMed:20543073, PubMed:23542643). Deletion of the gene almost abolishes the production of the quorum sensing signals 2-heptyl-3-hydroxy-4(1H)-quinolone (PQS) and N-butanoylhomoserine lactone (C4HSL), but it has no effect on the biosynthesis of the quorum sensing signal N-3-oxododecanoylhomoserine lactone (3OC12HSL) (PubMed:23542643). Deletion causes a substantial reduction in the production of the virulence factors pyocyanine and elastase, and it reduces bacterial virulence by about 32-40% (PubMed:23542643).</text>
</comment>
<comment type="similarity">
    <text evidence="7">Belongs to the NRP synthetase family.</text>
</comment>
<comment type="caution">
    <text evidence="4 5">It was suggested by Lee et al that the amb cluster is involved in the biosynthesis of 2-(2-hydroxyphenyl)-thiazole-4-carbaldehyde (IQS), a cell-cell communication signal that modulates the production of AMB through the pqs and rhl quorum sensing systems (PubMed:23542643). The chemical structure of IQS indicates that this compound may be assembled from salicylate and cysteine. However, neither of the two peptide synthases encoded by the amb gene cluster present adenylation domains with a specificity for these substrates. It is thus highly implausible that IQS is specified by the amb gene cluster (PubMed:25814981).</text>
</comment>
<feature type="chain" id="PRO_0000454845" description="AMB antimetabolite synthetase AmbB">
    <location>
        <begin position="1"/>
        <end position="1249"/>
    </location>
</feature>
<feature type="domain" description="Carrier" evidence="1">
    <location>
        <begin position="734"/>
        <end position="809"/>
    </location>
</feature>
<feature type="region of interest" description="Adenylation" evidence="7">
    <location>
        <begin position="245"/>
        <end position="633"/>
    </location>
</feature>
<feature type="region of interest" description="Disordered" evidence="2">
    <location>
        <begin position="716"/>
        <end position="735"/>
    </location>
</feature>
<feature type="region of interest" description="Condensation" evidence="7">
    <location>
        <begin position="823"/>
        <end position="1150"/>
    </location>
</feature>
<feature type="modified residue" description="O-(pantetheine 4'-phosphoryl)serine" evidence="1">
    <location>
        <position position="768"/>
    </location>
</feature>
<feature type="mutagenesis site" description="Can activate L-Ala but cannot load it onto its own carrier domain. Mutant loses the ability to make AMB." evidence="5">
    <original>S</original>
    <variation>A</variation>
    <location>
        <position position="768"/>
    </location>
</feature>
<feature type="helix" evidence="11">
    <location>
        <begin position="743"/>
        <end position="751"/>
    </location>
</feature>
<feature type="turn" evidence="11">
    <location>
        <begin position="761"/>
        <end position="765"/>
    </location>
</feature>
<feature type="helix" evidence="11">
    <location>
        <begin position="768"/>
        <end position="780"/>
    </location>
</feature>
<feature type="turn" evidence="11">
    <location>
        <begin position="781"/>
        <end position="783"/>
    </location>
</feature>
<feature type="helix" evidence="11">
    <location>
        <begin position="788"/>
        <end position="792"/>
    </location>
</feature>
<feature type="helix" evidence="11">
    <location>
        <begin position="798"/>
        <end position="807"/>
    </location>
</feature>
<feature type="helix" evidence="10">
    <location>
        <begin position="826"/>
        <end position="837"/>
    </location>
</feature>
<feature type="strand" evidence="10">
    <location>
        <begin position="845"/>
        <end position="854"/>
    </location>
</feature>
<feature type="helix" evidence="10">
    <location>
        <begin position="857"/>
        <end position="870"/>
    </location>
</feature>
<feature type="helix" evidence="10">
    <location>
        <begin position="872"/>
        <end position="875"/>
    </location>
</feature>
<feature type="strand" evidence="10">
    <location>
        <begin position="876"/>
        <end position="879"/>
    </location>
</feature>
<feature type="strand" evidence="12">
    <location>
        <begin position="882"/>
        <end position="884"/>
    </location>
</feature>
<feature type="strand" evidence="10">
    <location>
        <begin position="886"/>
        <end position="889"/>
    </location>
</feature>
<feature type="helix" evidence="10">
    <location>
        <begin position="892"/>
        <end position="894"/>
    </location>
</feature>
<feature type="strand" evidence="10">
    <location>
        <begin position="897"/>
        <end position="904"/>
    </location>
</feature>
<feature type="helix" evidence="10">
    <location>
        <begin position="905"/>
        <end position="921"/>
    </location>
</feature>
<feature type="turn" evidence="10">
    <location>
        <begin position="926"/>
        <end position="928"/>
    </location>
</feature>
<feature type="strand" evidence="10">
    <location>
        <begin position="931"/>
        <end position="939"/>
    </location>
</feature>
<feature type="strand" evidence="10">
    <location>
        <begin position="942"/>
        <end position="952"/>
    </location>
</feature>
<feature type="helix" evidence="10">
    <location>
        <begin position="953"/>
        <end position="955"/>
    </location>
</feature>
<feature type="helix" evidence="10">
    <location>
        <begin position="958"/>
        <end position="972"/>
    </location>
</feature>
<feature type="helix" evidence="10">
    <location>
        <begin position="984"/>
        <end position="996"/>
    </location>
</feature>
<feature type="helix" evidence="10">
    <location>
        <begin position="999"/>
        <end position="1011"/>
    </location>
</feature>
<feature type="helix" evidence="10">
    <location>
        <begin position="1012"/>
        <end position="1014"/>
    </location>
</feature>
<feature type="strand" evidence="10">
    <location>
        <begin position="1033"/>
        <end position="1039"/>
    </location>
</feature>
<feature type="helix" evidence="10">
    <location>
        <begin position="1042"/>
        <end position="1053"/>
    </location>
</feature>
<feature type="turn" evidence="10">
    <location>
        <begin position="1054"/>
        <end position="1056"/>
    </location>
</feature>
<feature type="helix" evidence="10">
    <location>
        <begin position="1059"/>
        <end position="1075"/>
    </location>
</feature>
<feature type="strand" evidence="10">
    <location>
        <begin position="1078"/>
        <end position="1086"/>
    </location>
</feature>
<feature type="helix" evidence="10">
    <location>
        <begin position="1092"/>
        <end position="1094"/>
    </location>
</feature>
<feature type="strand" evidence="10">
    <location>
        <begin position="1103"/>
        <end position="1110"/>
    </location>
</feature>
<feature type="helix" evidence="10">
    <location>
        <begin position="1117"/>
        <end position="1133"/>
    </location>
</feature>
<feature type="turn" evidence="10">
    <location>
        <begin position="1134"/>
        <end position="1136"/>
    </location>
</feature>
<feature type="helix" evidence="10">
    <location>
        <begin position="1139"/>
        <end position="1148"/>
    </location>
</feature>
<feature type="strand" evidence="10">
    <location>
        <begin position="1158"/>
        <end position="1163"/>
    </location>
</feature>
<feature type="strand" evidence="10">
    <location>
        <begin position="1176"/>
        <end position="1182"/>
    </location>
</feature>
<feature type="strand" evidence="10">
    <location>
        <begin position="1188"/>
        <end position="1196"/>
    </location>
</feature>
<feature type="strand" evidence="10">
    <location>
        <begin position="1203"/>
        <end position="1209"/>
    </location>
</feature>
<feature type="turn" evidence="10">
    <location>
        <begin position="1210"/>
        <end position="1212"/>
    </location>
</feature>
<feature type="helix" evidence="10">
    <location>
        <begin position="1215"/>
        <end position="1232"/>
    </location>
</feature>
<keyword id="KW-0002">3D-structure</keyword>
<keyword id="KW-0436">Ligase</keyword>
<keyword id="KW-0596">Phosphopantetheine</keyword>
<keyword id="KW-0597">Phosphoprotein</keyword>
<keyword id="KW-1185">Reference proteome</keyword>
<dbReference type="EC" id="6.2.1.67" evidence="5"/>
<dbReference type="EMBL" id="AE004091">
    <property type="protein sequence ID" value="AAG05693.1"/>
    <property type="molecule type" value="Genomic_DNA"/>
</dbReference>
<dbReference type="PIR" id="C83358">
    <property type="entry name" value="C83358"/>
</dbReference>
<dbReference type="RefSeq" id="NP_250995.1">
    <property type="nucleotide sequence ID" value="NC_002516.2"/>
</dbReference>
<dbReference type="RefSeq" id="WP_003113094.1">
    <property type="nucleotide sequence ID" value="NC_002516.2"/>
</dbReference>
<dbReference type="PDB" id="7X0E">
    <property type="method" value="X-ray"/>
    <property type="resolution" value="2.10 A"/>
    <property type="chains" value="A=727-1249"/>
</dbReference>
<dbReference type="PDB" id="7X0F">
    <property type="method" value="X-ray"/>
    <property type="resolution" value="2.20 A"/>
    <property type="chains" value="A/B/C/D=727-1249"/>
</dbReference>
<dbReference type="PDB" id="7X17">
    <property type="method" value="X-ray"/>
    <property type="resolution" value="2.50 A"/>
    <property type="chains" value="A/B/C/D=727-1249"/>
</dbReference>
<dbReference type="PDBsum" id="7X0E"/>
<dbReference type="PDBsum" id="7X0F"/>
<dbReference type="PDBsum" id="7X17"/>
<dbReference type="SMR" id="Q9I1H0"/>
<dbReference type="STRING" id="208964.PA2305"/>
<dbReference type="PaxDb" id="208964-PA2305"/>
<dbReference type="GeneID" id="878073"/>
<dbReference type="KEGG" id="pae:PA2305"/>
<dbReference type="PATRIC" id="fig|208964.12.peg.2409"/>
<dbReference type="PseudoCAP" id="PA2305"/>
<dbReference type="HOGENOM" id="CLU_000022_2_10_6"/>
<dbReference type="InParanoid" id="Q9I1H0"/>
<dbReference type="OrthoDB" id="9757559at2"/>
<dbReference type="PhylomeDB" id="Q9I1H0"/>
<dbReference type="BioCyc" id="MetaCyc:MONOMER-20272"/>
<dbReference type="BioCyc" id="PAER208964:G1FZ6-2344-MONOMER"/>
<dbReference type="BRENDA" id="6.2.1.67">
    <property type="organism ID" value="5087"/>
</dbReference>
<dbReference type="Proteomes" id="UP000002438">
    <property type="component" value="Chromosome"/>
</dbReference>
<dbReference type="GO" id="GO:0005737">
    <property type="term" value="C:cytoplasm"/>
    <property type="evidence" value="ECO:0000318"/>
    <property type="project" value="GO_Central"/>
</dbReference>
<dbReference type="GO" id="GO:0005829">
    <property type="term" value="C:cytosol"/>
    <property type="evidence" value="ECO:0000318"/>
    <property type="project" value="GO_Central"/>
</dbReference>
<dbReference type="GO" id="GO:0009366">
    <property type="term" value="C:enterobactin synthetase complex"/>
    <property type="evidence" value="ECO:0000318"/>
    <property type="project" value="GO_Central"/>
</dbReference>
<dbReference type="GO" id="GO:0047527">
    <property type="term" value="F:2,3-dihydroxybenzoate-serine ligase activity"/>
    <property type="evidence" value="ECO:0000318"/>
    <property type="project" value="GO_Central"/>
</dbReference>
<dbReference type="GO" id="GO:0031177">
    <property type="term" value="F:phosphopantetheine binding"/>
    <property type="evidence" value="ECO:0000318"/>
    <property type="project" value="GO_Central"/>
</dbReference>
<dbReference type="GO" id="GO:0043041">
    <property type="term" value="P:amino acid activation for nonribosomal peptide biosynthetic process"/>
    <property type="evidence" value="ECO:0000318"/>
    <property type="project" value="GO_Central"/>
</dbReference>
<dbReference type="GO" id="GO:0009239">
    <property type="term" value="P:enterobactin biosynthetic process"/>
    <property type="evidence" value="ECO:0000318"/>
    <property type="project" value="GO_Central"/>
</dbReference>
<dbReference type="CDD" id="cd12115">
    <property type="entry name" value="A_NRPS_Sfm_like"/>
    <property type="match status" value="1"/>
</dbReference>
<dbReference type="FunFam" id="3.30.300.30:FF:000010">
    <property type="entry name" value="Enterobactin synthetase component F"/>
    <property type="match status" value="1"/>
</dbReference>
<dbReference type="FunFam" id="3.40.50.980:FF:000001">
    <property type="entry name" value="Non-ribosomal peptide synthetase"/>
    <property type="match status" value="1"/>
</dbReference>
<dbReference type="Gene3D" id="3.30.300.30">
    <property type="match status" value="1"/>
</dbReference>
<dbReference type="Gene3D" id="3.40.50.980">
    <property type="match status" value="2"/>
</dbReference>
<dbReference type="Gene3D" id="1.10.1200.10">
    <property type="entry name" value="ACP-like"/>
    <property type="match status" value="1"/>
</dbReference>
<dbReference type="Gene3D" id="3.30.559.10">
    <property type="entry name" value="Chloramphenicol acetyltransferase-like domain"/>
    <property type="match status" value="1"/>
</dbReference>
<dbReference type="Gene3D" id="2.30.38.10">
    <property type="entry name" value="Luciferase, Domain 3"/>
    <property type="match status" value="1"/>
</dbReference>
<dbReference type="Gene3D" id="3.30.559.30">
    <property type="entry name" value="Nonribosomal peptide synthetase, condensation domain"/>
    <property type="match status" value="1"/>
</dbReference>
<dbReference type="InterPro" id="IPR010071">
    <property type="entry name" value="AA_adenyl_dom"/>
</dbReference>
<dbReference type="InterPro" id="IPR036736">
    <property type="entry name" value="ACP-like_sf"/>
</dbReference>
<dbReference type="InterPro" id="IPR025110">
    <property type="entry name" value="AMP-bd_C"/>
</dbReference>
<dbReference type="InterPro" id="IPR045851">
    <property type="entry name" value="AMP-bd_C_sf"/>
</dbReference>
<dbReference type="InterPro" id="IPR020845">
    <property type="entry name" value="AMP-binding_CS"/>
</dbReference>
<dbReference type="InterPro" id="IPR000873">
    <property type="entry name" value="AMP-dep_synth/lig_dom"/>
</dbReference>
<dbReference type="InterPro" id="IPR023213">
    <property type="entry name" value="CAT-like_dom_sf"/>
</dbReference>
<dbReference type="InterPro" id="IPR001242">
    <property type="entry name" value="Condensatn"/>
</dbReference>
<dbReference type="InterPro" id="IPR009081">
    <property type="entry name" value="PP-bd_ACP"/>
</dbReference>
<dbReference type="InterPro" id="IPR006162">
    <property type="entry name" value="Ppantetheine_attach_site"/>
</dbReference>
<dbReference type="NCBIfam" id="TIGR01733">
    <property type="entry name" value="AA-adenyl-dom"/>
    <property type="match status" value="1"/>
</dbReference>
<dbReference type="PANTHER" id="PTHR45527:SF1">
    <property type="entry name" value="FATTY ACID SYNTHASE"/>
    <property type="match status" value="1"/>
</dbReference>
<dbReference type="PANTHER" id="PTHR45527">
    <property type="entry name" value="NONRIBOSOMAL PEPTIDE SYNTHETASE"/>
    <property type="match status" value="1"/>
</dbReference>
<dbReference type="Pfam" id="PF00501">
    <property type="entry name" value="AMP-binding"/>
    <property type="match status" value="1"/>
</dbReference>
<dbReference type="Pfam" id="PF13193">
    <property type="entry name" value="AMP-binding_C"/>
    <property type="match status" value="1"/>
</dbReference>
<dbReference type="Pfam" id="PF00668">
    <property type="entry name" value="Condensation"/>
    <property type="match status" value="1"/>
</dbReference>
<dbReference type="Pfam" id="PF00550">
    <property type="entry name" value="PP-binding"/>
    <property type="match status" value="1"/>
</dbReference>
<dbReference type="SUPFAM" id="SSF56801">
    <property type="entry name" value="Acetyl-CoA synthetase-like"/>
    <property type="match status" value="1"/>
</dbReference>
<dbReference type="SUPFAM" id="SSF47336">
    <property type="entry name" value="ACP-like"/>
    <property type="match status" value="1"/>
</dbReference>
<dbReference type="SUPFAM" id="SSF52777">
    <property type="entry name" value="CoA-dependent acyltransferases"/>
    <property type="match status" value="2"/>
</dbReference>
<dbReference type="PROSITE" id="PS00455">
    <property type="entry name" value="AMP_BINDING"/>
    <property type="match status" value="1"/>
</dbReference>
<dbReference type="PROSITE" id="PS50075">
    <property type="entry name" value="CARRIER"/>
    <property type="match status" value="1"/>
</dbReference>
<dbReference type="PROSITE" id="PS00012">
    <property type="entry name" value="PHOSPHOPANTETHEINE"/>
    <property type="match status" value="1"/>
</dbReference>
<accession>Q9I1H0</accession>
<organism>
    <name type="scientific">Pseudomonas aeruginosa (strain ATCC 15692 / DSM 22644 / CIP 104116 / JCM 14847 / LMG 12228 / 1C / PRS 101 / PAO1)</name>
    <dbReference type="NCBI Taxonomy" id="208964"/>
    <lineage>
        <taxon>Bacteria</taxon>
        <taxon>Pseudomonadati</taxon>
        <taxon>Pseudomonadota</taxon>
        <taxon>Gammaproteobacteria</taxon>
        <taxon>Pseudomonadales</taxon>
        <taxon>Pseudomonadaceae</taxon>
        <taxon>Pseudomonas</taxon>
    </lineage>
</organism>
<evidence type="ECO:0000255" key="1">
    <source>
        <dbReference type="PROSITE-ProRule" id="PRU00258"/>
    </source>
</evidence>
<evidence type="ECO:0000256" key="2">
    <source>
        <dbReference type="SAM" id="MobiDB-lite"/>
    </source>
</evidence>
<evidence type="ECO:0000269" key="3">
    <source>
    </source>
</evidence>
<evidence type="ECO:0000269" key="4">
    <source>
    </source>
</evidence>
<evidence type="ECO:0000269" key="5">
    <source>
    </source>
</evidence>
<evidence type="ECO:0000303" key="6">
    <source>
    </source>
</evidence>
<evidence type="ECO:0000305" key="7"/>
<evidence type="ECO:0000305" key="8">
    <source>
    </source>
</evidence>
<evidence type="ECO:0000312" key="9">
    <source>
        <dbReference type="EMBL" id="AAG05693.1"/>
    </source>
</evidence>
<evidence type="ECO:0007829" key="10">
    <source>
        <dbReference type="PDB" id="7X0E"/>
    </source>
</evidence>
<evidence type="ECO:0007829" key="11">
    <source>
        <dbReference type="PDB" id="7X0F"/>
    </source>
</evidence>
<evidence type="ECO:0007829" key="12">
    <source>
        <dbReference type="PDB" id="7X17"/>
    </source>
</evidence>
<protein>
    <recommendedName>
        <fullName evidence="7">AMB antimetabolite synthetase AmbB</fullName>
        <ecNumber evidence="5">6.2.1.67</ecNumber>
    </recommendedName>
    <alternativeName>
        <fullName evidence="7">L-alanine--[L-alanyl-carrier protein] ligase</fullName>
    </alternativeName>
    <alternativeName>
        <fullName evidence="7">Nonribosomal peptide synthetase AmbB</fullName>
    </alternativeName>
</protein>
<reference key="1">
    <citation type="journal article" date="2000" name="Nature">
        <title>Complete genome sequence of Pseudomonas aeruginosa PAO1, an opportunistic pathogen.</title>
        <authorList>
            <person name="Stover C.K."/>
            <person name="Pham X.-Q.T."/>
            <person name="Erwin A.L."/>
            <person name="Mizoguchi S.D."/>
            <person name="Warrener P."/>
            <person name="Hickey M.J."/>
            <person name="Brinkman F.S.L."/>
            <person name="Hufnagle W.O."/>
            <person name="Kowalik D.J."/>
            <person name="Lagrou M."/>
            <person name="Garber R.L."/>
            <person name="Goltry L."/>
            <person name="Tolentino E."/>
            <person name="Westbrock-Wadman S."/>
            <person name="Yuan Y."/>
            <person name="Brody L.L."/>
            <person name="Coulter S.N."/>
            <person name="Folger K.R."/>
            <person name="Kas A."/>
            <person name="Larbig K."/>
            <person name="Lim R.M."/>
            <person name="Smith K.A."/>
            <person name="Spencer D.H."/>
            <person name="Wong G.K.-S."/>
            <person name="Wu Z."/>
            <person name="Paulsen I.T."/>
            <person name="Reizer J."/>
            <person name="Saier M.H. Jr."/>
            <person name="Hancock R.E.W."/>
            <person name="Lory S."/>
            <person name="Olson M.V."/>
        </authorList>
    </citation>
    <scope>NUCLEOTIDE SEQUENCE [LARGE SCALE GENOMIC DNA]</scope>
    <source>
        <strain>ATCC 15692 / DSM 22644 / CIP 104116 / JCM 14847 / LMG 12228 / 1C / PRS 101 / PAO1</strain>
    </source>
</reference>
<reference key="2">
    <citation type="journal article" date="2010" name="J. Bacteriol.">
        <title>Identification of the biosynthetic gene cluster for the Pseudomonas aeruginosa antimetabolite L-2-amino-4-methoxy-trans-3-butenoic acid.</title>
        <authorList>
            <person name="Lee X."/>
            <person name="Fox A."/>
            <person name="Sufrin J."/>
            <person name="Henry H."/>
            <person name="Majcherczyk P."/>
            <person name="Haas D."/>
            <person name="Reimmann C."/>
        </authorList>
    </citation>
    <scope>FUNCTION</scope>
    <scope>DISRUPTION PHENOTYPE</scope>
    <source>
        <strain>ATCC 15692 / DSM 22644 / CIP 104116 / JCM 14847 / LMG 12228 / 1C / PRS 101 / PAO1</strain>
    </source>
</reference>
<reference key="3">
    <citation type="journal article" date="2013" name="Nat. Chem. Biol.">
        <title>A cell-cell communication signal integrates quorum sensing and stress response.</title>
        <authorList>
            <person name="Lee J."/>
            <person name="Wu J."/>
            <person name="Deng Y."/>
            <person name="Wang J."/>
            <person name="Wang C."/>
            <person name="Wang J."/>
            <person name="Chang C."/>
            <person name="Dong Y."/>
            <person name="Williams P."/>
            <person name="Zhang L.H."/>
        </authorList>
    </citation>
    <scope>PROPOSED FUNCTION IN IQS BIOSYNTHESIS</scope>
    <scope>INDUCTION</scope>
    <scope>DISRUPTION PHENOTYPE</scope>
    <source>
        <strain>ATCC 15692 / DSM 22644 / CIP 104116 / JCM 14847 / LMG 12228 / 1C / PRS 101 / PAO1</strain>
    </source>
</reference>
<reference key="4">
    <citation type="journal article" date="2015" name="Front. Microbiol.">
        <title>The Pseudomonas aeruginosa antimetabolite L -2-amino-4-methoxy-trans-3-butenoic acid (AMB) is made from glutamate and two alanine residues via a thiotemplate-linked tripeptide precursor.</title>
        <authorList>
            <person name="Rojas Murcia N."/>
            <person name="Lee X."/>
            <person name="Waridel P."/>
            <person name="Maspoli A."/>
            <person name="Imker H.J."/>
            <person name="Chai T."/>
            <person name="Walsh C.T."/>
            <person name="Reimmann C."/>
        </authorList>
    </citation>
    <scope>FUNCTION</scope>
    <scope>CATALYTIC ACTIVITY</scope>
    <scope>COFACTOR</scope>
    <scope>DOMAIN</scope>
    <scope>MUTAGENESIS OF SER-768</scope>
    <source>
        <strain>ATCC 15692 / DSM 22644 / CIP 104116 / JCM 14847 / LMG 12228 / 1C / PRS 101 / PAO1</strain>
    </source>
</reference>
<reference key="5">
    <citation type="journal article" date="2014" name="Acta Crystallogr. F Struct. Biol. Commun.">
        <title>Crystallization and preliminary X-ray crystallographic analysis of a putative nonribosomal peptide synthase AmbB from Pseudomonas aeruginosa.</title>
        <authorList>
            <person name="Wang Y."/>
            <person name="Li D."/>
            <person name="Huan X."/>
            <person name="Zhang L."/>
            <person name="Song H."/>
        </authorList>
    </citation>
    <scope>CRYSTALLIZATION OF 727-1249</scope>
    <source>
        <strain>ATCC 15692 / DSM 22644 / CIP 104116 / JCM 14847 / LMG 12228 / 1C / PRS 101 / PAO1</strain>
    </source>
</reference>
<gene>
    <name evidence="6" type="primary">ambB</name>
    <name evidence="9" type="ordered locus">PA2305</name>
</gene>
<proteinExistence type="evidence at protein level"/>